<sequence>MRRQLRSRRAPAFPYGYGYRLDDQDEVNQNYLADEEEEAEEARVMVVPDLEEEEKEEEEEKEEDEKEEEESHHQDTRSAWWQKLQIVNEYLWDPEKRMSLARTGQSLSLLLVIYFFFYASLAAVITLCMYTLFLTISPYVPTFTERVKPPGVMIRPFAHSLNFNFNVSEPDTWQHYVISLNGFLQGYNDSLQEEMNVDCPPGQYFIQDGDEDEDKKACQFKRSFLKNCSGLEDPTFGYSTGQPCILLKMNRIVGFRPELGDPVKVSCKVQRGDENDIRSISYYPESASFDLRYYPYYGKLTHVNYTSPLVAMHFTDVVKNQAVPVQCQLKGKGIINDVINDRFVGRVIFTLNIET</sequence>
<accession>Q9BDK6</accession>
<accession>Q9BDK5</accession>
<keyword id="KW-0025">Alternative splicing</keyword>
<keyword id="KW-0472">Membrane</keyword>
<keyword id="KW-0539">Nucleus</keyword>
<keyword id="KW-1185">Reference proteome</keyword>
<keyword id="KW-0735">Signal-anchor</keyword>
<keyword id="KW-0804">Transcription</keyword>
<keyword id="KW-0805">Transcription regulation</keyword>
<keyword id="KW-0812">Transmembrane</keyword>
<keyword id="KW-1133">Transmembrane helix</keyword>
<protein>
    <recommendedName>
        <fullName>Protein ATP1B4</fullName>
    </recommendedName>
    <alternativeName>
        <fullName>X,K-ATPase subunit beta-m</fullName>
    </alternativeName>
    <alternativeName>
        <fullName>X/potassium-transporting ATPase subunit beta-m</fullName>
    </alternativeName>
</protein>
<dbReference type="EMBL" id="AF348326">
    <property type="protein sequence ID" value="AAK30150.1"/>
    <property type="molecule type" value="mRNA"/>
</dbReference>
<dbReference type="EMBL" id="AF348327">
    <property type="protein sequence ID" value="AAK30151.2"/>
    <property type="molecule type" value="mRNA"/>
</dbReference>
<dbReference type="RefSeq" id="NP_999297.1">
    <molecule id="Q9BDK6-1"/>
    <property type="nucleotide sequence ID" value="NM_214132.1"/>
</dbReference>
<dbReference type="RefSeq" id="XP_005673910.1">
    <molecule id="Q9BDK6-2"/>
    <property type="nucleotide sequence ID" value="XM_005673853.3"/>
</dbReference>
<dbReference type="SMR" id="Q9BDK6"/>
<dbReference type="FunCoup" id="Q9BDK6">
    <property type="interactions" value="240"/>
</dbReference>
<dbReference type="STRING" id="9823.ENSSSCP00000029611"/>
<dbReference type="PaxDb" id="9823-ENSSSCP00000029611"/>
<dbReference type="PeptideAtlas" id="Q9BDK6"/>
<dbReference type="Ensembl" id="ENSSSCT00000032976.4">
    <molecule id="Q9BDK6-1"/>
    <property type="protein sequence ID" value="ENSSSCP00000029611.1"/>
    <property type="gene ID" value="ENSSSCG00000012606.6"/>
</dbReference>
<dbReference type="Ensembl" id="ENSSSCT00015086346.1">
    <molecule id="Q9BDK6-1"/>
    <property type="protein sequence ID" value="ENSSSCP00015035114.1"/>
    <property type="gene ID" value="ENSSSCG00015064408.1"/>
</dbReference>
<dbReference type="Ensembl" id="ENSSSCT00015086767.1">
    <molecule id="Q9BDK6-2"/>
    <property type="protein sequence ID" value="ENSSSCP00015035329.1"/>
    <property type="gene ID" value="ENSSSCG00015064408.1"/>
</dbReference>
<dbReference type="Ensembl" id="ENSSSCT00030071757.1">
    <molecule id="Q9BDK6-1"/>
    <property type="protein sequence ID" value="ENSSSCP00030032714.1"/>
    <property type="gene ID" value="ENSSSCG00030051494.1"/>
</dbReference>
<dbReference type="Ensembl" id="ENSSSCT00030071826.1">
    <molecule id="Q9BDK6-2"/>
    <property type="protein sequence ID" value="ENSSSCP00030032744.1"/>
    <property type="gene ID" value="ENSSSCG00030051494.1"/>
</dbReference>
<dbReference type="Ensembl" id="ENSSSCT00035097157.1">
    <molecule id="Q9BDK6-1"/>
    <property type="protein sequence ID" value="ENSSSCP00035040961.1"/>
    <property type="gene ID" value="ENSSSCG00035071841.1"/>
</dbReference>
<dbReference type="Ensembl" id="ENSSSCT00035097227.1">
    <molecule id="Q9BDK6-2"/>
    <property type="protein sequence ID" value="ENSSSCP00035040998.1"/>
    <property type="gene ID" value="ENSSSCG00035071841.1"/>
</dbReference>
<dbReference type="Ensembl" id="ENSSSCT00040068052.1">
    <molecule id="Q9BDK6-1"/>
    <property type="protein sequence ID" value="ENSSSCP00040028930.1"/>
    <property type="gene ID" value="ENSSSCG00040050376.1"/>
</dbReference>
<dbReference type="Ensembl" id="ENSSSCT00040068382.1">
    <molecule id="Q9BDK6-2"/>
    <property type="protein sequence ID" value="ENSSSCP00040029099.1"/>
    <property type="gene ID" value="ENSSSCG00040050376.1"/>
</dbReference>
<dbReference type="Ensembl" id="ENSSSCT00045024986.1">
    <molecule id="Q9BDK6-1"/>
    <property type="protein sequence ID" value="ENSSSCP00045017257.1"/>
    <property type="gene ID" value="ENSSSCG00045014669.1"/>
</dbReference>
<dbReference type="Ensembl" id="ENSSSCT00045025012.1">
    <molecule id="Q9BDK6-2"/>
    <property type="protein sequence ID" value="ENSSSCP00045017274.1"/>
    <property type="gene ID" value="ENSSSCG00045014669.1"/>
</dbReference>
<dbReference type="Ensembl" id="ENSSSCT00050091319.1">
    <molecule id="Q9BDK6-1"/>
    <property type="protein sequence ID" value="ENSSSCP00050039272.1"/>
    <property type="gene ID" value="ENSSSCG00050067009.1"/>
</dbReference>
<dbReference type="Ensembl" id="ENSSSCT00050091332.1">
    <molecule id="Q9BDK6-2"/>
    <property type="protein sequence ID" value="ENSSSCP00050039280.1"/>
    <property type="gene ID" value="ENSSSCG00050067009.1"/>
</dbReference>
<dbReference type="Ensembl" id="ENSSSCT00055010393.1">
    <molecule id="Q9BDK6-1"/>
    <property type="protein sequence ID" value="ENSSSCP00055008205.1"/>
    <property type="gene ID" value="ENSSSCG00055005325.1"/>
</dbReference>
<dbReference type="Ensembl" id="ENSSSCT00055010425.1">
    <molecule id="Q9BDK6-2"/>
    <property type="protein sequence ID" value="ENSSSCP00055008233.1"/>
    <property type="gene ID" value="ENSSSCG00055005325.1"/>
</dbReference>
<dbReference type="Ensembl" id="ENSSSCT00060044026.1">
    <molecule id="Q9BDK6-1"/>
    <property type="protein sequence ID" value="ENSSSCP00060018783.1"/>
    <property type="gene ID" value="ENSSSCG00060032513.1"/>
</dbReference>
<dbReference type="Ensembl" id="ENSSSCT00060044058.1">
    <molecule id="Q9BDK6-2"/>
    <property type="protein sequence ID" value="ENSSSCP00060018795.1"/>
    <property type="gene ID" value="ENSSSCG00060032513.1"/>
</dbReference>
<dbReference type="Ensembl" id="ENSSSCT00065008229.1">
    <molecule id="Q9BDK6-1"/>
    <property type="protein sequence ID" value="ENSSSCP00065003472.1"/>
    <property type="gene ID" value="ENSSSCG00065006127.1"/>
</dbReference>
<dbReference type="Ensembl" id="ENSSSCT00065008246.1">
    <molecule id="Q9BDK6-2"/>
    <property type="protein sequence ID" value="ENSSSCP00065003483.1"/>
    <property type="gene ID" value="ENSSSCG00065006127.1"/>
</dbReference>
<dbReference type="Ensembl" id="ENSSSCT00070058408.1">
    <molecule id="Q9BDK6-1"/>
    <property type="protein sequence ID" value="ENSSSCP00070049669.1"/>
    <property type="gene ID" value="ENSSSCG00070029108.1"/>
</dbReference>
<dbReference type="Ensembl" id="ENSSSCT00085046965">
    <molecule id="Q9BDK6-1"/>
    <property type="protein sequence ID" value="ENSSSCP00085032766"/>
    <property type="gene ID" value="ENSSSCG00085024497"/>
</dbReference>
<dbReference type="Ensembl" id="ENSSSCT00090018576">
    <molecule id="Q9BDK6-1"/>
    <property type="protein sequence ID" value="ENSSSCP00090011539"/>
    <property type="gene ID" value="ENSSSCG00090010474"/>
</dbReference>
<dbReference type="Ensembl" id="ENSSSCT00090018589">
    <molecule id="Q9BDK6-1"/>
    <property type="protein sequence ID" value="ENSSSCP00090011546"/>
    <property type="gene ID" value="ENSSSCG00090010474"/>
</dbReference>
<dbReference type="Ensembl" id="ENSSSCT00105060949">
    <molecule id="Q9BDK6-1"/>
    <property type="protein sequence ID" value="ENSSSCP00105043247"/>
    <property type="gene ID" value="ENSSSCG00105032013"/>
</dbReference>
<dbReference type="Ensembl" id="ENSSSCT00110020530">
    <molecule id="Q9BDK6-1"/>
    <property type="protein sequence ID" value="ENSSSCP00110013811"/>
    <property type="gene ID" value="ENSSSCG00110010707"/>
</dbReference>
<dbReference type="Ensembl" id="ENSSSCT00115002965">
    <molecule id="Q9BDK6-1"/>
    <property type="protein sequence ID" value="ENSSSCP00115002760"/>
    <property type="gene ID" value="ENSSSCG00115001740"/>
</dbReference>
<dbReference type="Ensembl" id="ENSSSCT00130012860">
    <molecule id="Q9BDK6-1"/>
    <property type="protein sequence ID" value="ENSSSCP00130008511"/>
    <property type="gene ID" value="ENSSSCG00130007071"/>
</dbReference>
<dbReference type="GeneID" id="397245"/>
<dbReference type="KEGG" id="ssc:397245"/>
<dbReference type="CTD" id="23439"/>
<dbReference type="eggNOG" id="KOG3927">
    <property type="taxonomic scope" value="Eukaryota"/>
</dbReference>
<dbReference type="GeneTree" id="ENSGT01030000234579"/>
<dbReference type="HOGENOM" id="CLU_057702_1_0_1"/>
<dbReference type="InParanoid" id="Q9BDK6"/>
<dbReference type="OMA" id="FGGCMFC"/>
<dbReference type="OrthoDB" id="5912413at2759"/>
<dbReference type="TreeFam" id="TF314618"/>
<dbReference type="Reactome" id="R-SSC-2173795">
    <property type="pathway name" value="Downregulation of SMAD2/3:SMAD4 transcriptional activity"/>
</dbReference>
<dbReference type="Proteomes" id="UP000008227">
    <property type="component" value="Chromosome X"/>
</dbReference>
<dbReference type="Proteomes" id="UP000314985">
    <property type="component" value="Unassembled WGS sequence"/>
</dbReference>
<dbReference type="Proteomes" id="UP000694570">
    <property type="component" value="Unplaced"/>
</dbReference>
<dbReference type="Proteomes" id="UP000694571">
    <property type="component" value="Unplaced"/>
</dbReference>
<dbReference type="Proteomes" id="UP000694720">
    <property type="component" value="Unplaced"/>
</dbReference>
<dbReference type="Proteomes" id="UP000694722">
    <property type="component" value="Unplaced"/>
</dbReference>
<dbReference type="Proteomes" id="UP000694723">
    <property type="component" value="Unplaced"/>
</dbReference>
<dbReference type="Proteomes" id="UP000694724">
    <property type="component" value="Unplaced"/>
</dbReference>
<dbReference type="Proteomes" id="UP000694725">
    <property type="component" value="Unplaced"/>
</dbReference>
<dbReference type="Proteomes" id="UP000694726">
    <property type="component" value="Unplaced"/>
</dbReference>
<dbReference type="Proteomes" id="UP000694727">
    <property type="component" value="Unplaced"/>
</dbReference>
<dbReference type="Proteomes" id="UP000694728">
    <property type="component" value="Unplaced"/>
</dbReference>
<dbReference type="Bgee" id="ENSSSCG00000012606">
    <property type="expression patterns" value="Expressed in skeletal muscle tissue and 7 other cell types or tissues"/>
</dbReference>
<dbReference type="ExpressionAtlas" id="Q9BDK6">
    <property type="expression patterns" value="baseline"/>
</dbReference>
<dbReference type="GO" id="GO:0005635">
    <property type="term" value="C:nuclear envelope"/>
    <property type="evidence" value="ECO:0000314"/>
    <property type="project" value="MGI"/>
</dbReference>
<dbReference type="GO" id="GO:0005637">
    <property type="term" value="C:nuclear inner membrane"/>
    <property type="evidence" value="ECO:0000314"/>
    <property type="project" value="UniProtKB"/>
</dbReference>
<dbReference type="GO" id="GO:0005890">
    <property type="term" value="C:sodium:potassium-exchanging ATPase complex"/>
    <property type="evidence" value="ECO:0007669"/>
    <property type="project" value="InterPro"/>
</dbReference>
<dbReference type="GO" id="GO:0006813">
    <property type="term" value="P:potassium ion transport"/>
    <property type="evidence" value="ECO:0007669"/>
    <property type="project" value="InterPro"/>
</dbReference>
<dbReference type="GO" id="GO:0006355">
    <property type="term" value="P:regulation of DNA-templated transcription"/>
    <property type="evidence" value="ECO:0000250"/>
    <property type="project" value="UniProtKB"/>
</dbReference>
<dbReference type="GO" id="GO:0006814">
    <property type="term" value="P:sodium ion transport"/>
    <property type="evidence" value="ECO:0007669"/>
    <property type="project" value="InterPro"/>
</dbReference>
<dbReference type="FunFam" id="2.60.40.1660:FF:000001">
    <property type="entry name" value="Sodium/potassium-transporting ATPase subunit beta"/>
    <property type="match status" value="1"/>
</dbReference>
<dbReference type="Gene3D" id="2.60.40.1660">
    <property type="entry name" value="Na, k-atpase alpha subunit"/>
    <property type="match status" value="1"/>
</dbReference>
<dbReference type="InterPro" id="IPR000402">
    <property type="entry name" value="Na/K_ATPase_sub_beta"/>
</dbReference>
<dbReference type="InterPro" id="IPR038702">
    <property type="entry name" value="Na/K_ATPase_sub_beta_sf"/>
</dbReference>
<dbReference type="NCBIfam" id="TIGR01107">
    <property type="entry name" value="Na_K_ATPase_bet"/>
    <property type="match status" value="1"/>
</dbReference>
<dbReference type="PANTHER" id="PTHR11523:SF12">
    <property type="entry name" value="PROTEIN ATP1B4"/>
    <property type="match status" value="1"/>
</dbReference>
<dbReference type="PANTHER" id="PTHR11523">
    <property type="entry name" value="SODIUM/POTASSIUM-DEPENDENT ATPASE BETA SUBUNIT"/>
    <property type="match status" value="1"/>
</dbReference>
<dbReference type="Pfam" id="PF00287">
    <property type="entry name" value="Na_K-ATPase"/>
    <property type="match status" value="1"/>
</dbReference>
<dbReference type="PROSITE" id="PS00390">
    <property type="entry name" value="ATPASE_NA_K_BETA_1"/>
    <property type="match status" value="1"/>
</dbReference>
<dbReference type="PROSITE" id="PS00391">
    <property type="entry name" value="ATPASE_NA_K_BETA_2"/>
    <property type="match status" value="1"/>
</dbReference>
<proteinExistence type="evidence at protein level"/>
<name>AT1B4_PIG</name>
<reference key="1">
    <citation type="submission" date="2001-02" db="EMBL/GenBank/DDBJ databases">
        <authorList>
            <person name="Pestov N.B."/>
            <person name="Shakhparonov M.I."/>
            <person name="Modyanov N.N."/>
        </authorList>
    </citation>
    <scope>NUCLEOTIDE SEQUENCE [MRNA] (ISOFORMS A AND B)</scope>
    <source>
        <tissue>Skeletal muscle</tissue>
    </source>
</reference>
<reference key="2">
    <citation type="journal article" date="2004" name="Am. J. Physiol.">
        <title>Accumulation of beta (m), a structural member of X,K-ATPase beta-subunit family, in nuclear envelopes of perinatal myocytes.</title>
        <authorList>
            <person name="Zhao H."/>
            <person name="Pestov N.B."/>
            <person name="Korneenko T.V."/>
            <person name="Shakhparonov M.I."/>
            <person name="Modyanov N.N."/>
        </authorList>
    </citation>
    <scope>SUBCELLULAR LOCATION</scope>
    <scope>TISSUE SPECIFICITY</scope>
</reference>
<gene>
    <name type="primary">ATP1B4</name>
</gene>
<organism>
    <name type="scientific">Sus scrofa</name>
    <name type="common">Pig</name>
    <dbReference type="NCBI Taxonomy" id="9823"/>
    <lineage>
        <taxon>Eukaryota</taxon>
        <taxon>Metazoa</taxon>
        <taxon>Chordata</taxon>
        <taxon>Craniata</taxon>
        <taxon>Vertebrata</taxon>
        <taxon>Euteleostomi</taxon>
        <taxon>Mammalia</taxon>
        <taxon>Eutheria</taxon>
        <taxon>Laurasiatheria</taxon>
        <taxon>Artiodactyla</taxon>
        <taxon>Suina</taxon>
        <taxon>Suidae</taxon>
        <taxon>Sus</taxon>
    </lineage>
</organism>
<feature type="chain" id="PRO_0000219124" description="Protein ATP1B4">
    <location>
        <begin position="1"/>
        <end position="355"/>
    </location>
</feature>
<feature type="topological domain" description="Nuclear" evidence="2">
    <location>
        <begin position="1"/>
        <end position="108"/>
    </location>
</feature>
<feature type="transmembrane region" description="Helical; Signal-anchor for type II membrane protein" evidence="2">
    <location>
        <begin position="109"/>
        <end position="129"/>
    </location>
</feature>
<feature type="topological domain" description="Perinuclear space" evidence="2">
    <location>
        <begin position="130"/>
        <end position="355"/>
    </location>
</feature>
<feature type="region of interest" description="Disordered" evidence="3">
    <location>
        <begin position="35"/>
        <end position="76"/>
    </location>
</feature>
<feature type="compositionally biased region" description="Acidic residues" evidence="3">
    <location>
        <begin position="49"/>
        <end position="68"/>
    </location>
</feature>
<feature type="splice variant" id="VSP_000353" description="In isoform B." evidence="5">
    <location>
        <begin position="105"/>
        <end position="108"/>
    </location>
</feature>
<comment type="function">
    <text evidence="1">May act as a transcriptional coregulator during muscle development through its interaction with SNW1. Has lost its ancestral function as a Na,K-ATPase beta-subunit (By similarity).</text>
</comment>
<comment type="subunit">
    <text evidence="1">Associates with a SMAD7-transcriptional complex. Interacts with SNW1 and TOR1AIP1. Does not associate with known Na,K-ATPase alpha-subunits (By similarity).</text>
</comment>
<comment type="subcellular location">
    <subcellularLocation>
        <location evidence="4">Nucleus inner membrane</location>
        <topology evidence="4">Single-pass type II membrane protein</topology>
    </subcellularLocation>
    <text>Detected in nuclear envelops.</text>
</comment>
<comment type="alternative products">
    <event type="alternative splicing"/>
    <isoform>
        <id>Q9BDK6-1</id>
        <name>A</name>
        <sequence type="displayed"/>
    </isoform>
    <isoform>
        <id>Q9BDK6-2</id>
        <name>B</name>
        <sequence type="described" ref="VSP_000353"/>
    </isoform>
</comment>
<comment type="tissue specificity">
    <text evidence="4">Expressed in skeletal muscle (at protein level). Expressed during postnatal development in skeletal muscle and heart.</text>
</comment>
<comment type="similarity">
    <text evidence="6">Belongs to the X(+)/potassium ATPases subunit beta family.</text>
</comment>
<evidence type="ECO:0000250" key="1"/>
<evidence type="ECO:0000255" key="2"/>
<evidence type="ECO:0000256" key="3">
    <source>
        <dbReference type="SAM" id="MobiDB-lite"/>
    </source>
</evidence>
<evidence type="ECO:0000269" key="4">
    <source>
    </source>
</evidence>
<evidence type="ECO:0000303" key="5">
    <source ref="1"/>
</evidence>
<evidence type="ECO:0000305" key="6"/>